<evidence type="ECO:0000255" key="1">
    <source>
        <dbReference type="HAMAP-Rule" id="MF_00649"/>
    </source>
</evidence>
<evidence type="ECO:0000256" key="2">
    <source>
        <dbReference type="SAM" id="MobiDB-lite"/>
    </source>
</evidence>
<organism>
    <name type="scientific">Aeromonas salmonicida (strain A449)</name>
    <dbReference type="NCBI Taxonomy" id="382245"/>
    <lineage>
        <taxon>Bacteria</taxon>
        <taxon>Pseudomonadati</taxon>
        <taxon>Pseudomonadota</taxon>
        <taxon>Gammaproteobacteria</taxon>
        <taxon>Aeromonadales</taxon>
        <taxon>Aeromonadaceae</taxon>
        <taxon>Aeromonas</taxon>
    </lineage>
</organism>
<gene>
    <name evidence="1" type="primary">yacG</name>
    <name type="ordered locus">ASA_0408</name>
</gene>
<dbReference type="EMBL" id="CP000644">
    <property type="protein sequence ID" value="ABO88588.1"/>
    <property type="molecule type" value="Genomic_DNA"/>
</dbReference>
<dbReference type="RefSeq" id="WP_005314167.1">
    <property type="nucleotide sequence ID" value="NC_009348.1"/>
</dbReference>
<dbReference type="SMR" id="A4SI66"/>
<dbReference type="STRING" id="29491.GCA_000820065_04405"/>
<dbReference type="GeneID" id="79877943"/>
<dbReference type="KEGG" id="asa:ASA_0408"/>
<dbReference type="eggNOG" id="COG3024">
    <property type="taxonomic scope" value="Bacteria"/>
</dbReference>
<dbReference type="HOGENOM" id="CLU_178280_1_0_6"/>
<dbReference type="Proteomes" id="UP000000225">
    <property type="component" value="Chromosome"/>
</dbReference>
<dbReference type="GO" id="GO:0008657">
    <property type="term" value="F:DNA topoisomerase type II (double strand cut, ATP-hydrolyzing) inhibitor activity"/>
    <property type="evidence" value="ECO:0007669"/>
    <property type="project" value="UniProtKB-UniRule"/>
</dbReference>
<dbReference type="GO" id="GO:0008270">
    <property type="term" value="F:zinc ion binding"/>
    <property type="evidence" value="ECO:0007669"/>
    <property type="project" value="UniProtKB-UniRule"/>
</dbReference>
<dbReference type="GO" id="GO:0006355">
    <property type="term" value="P:regulation of DNA-templated transcription"/>
    <property type="evidence" value="ECO:0007669"/>
    <property type="project" value="InterPro"/>
</dbReference>
<dbReference type="Gene3D" id="3.30.50.10">
    <property type="entry name" value="Erythroid Transcription Factor GATA-1, subunit A"/>
    <property type="match status" value="1"/>
</dbReference>
<dbReference type="HAMAP" id="MF_00649">
    <property type="entry name" value="DNA_gyrase_inhibitor_YacG"/>
    <property type="match status" value="1"/>
</dbReference>
<dbReference type="InterPro" id="IPR005584">
    <property type="entry name" value="DNA_gyrase_inhibitor_YacG"/>
</dbReference>
<dbReference type="InterPro" id="IPR013088">
    <property type="entry name" value="Znf_NHR/GATA"/>
</dbReference>
<dbReference type="NCBIfam" id="NF001638">
    <property type="entry name" value="PRK00418.1"/>
    <property type="match status" value="1"/>
</dbReference>
<dbReference type="PANTHER" id="PTHR36150">
    <property type="entry name" value="DNA GYRASE INHIBITOR YACG"/>
    <property type="match status" value="1"/>
</dbReference>
<dbReference type="PANTHER" id="PTHR36150:SF1">
    <property type="entry name" value="DNA GYRASE INHIBITOR YACG"/>
    <property type="match status" value="1"/>
</dbReference>
<dbReference type="Pfam" id="PF03884">
    <property type="entry name" value="YacG"/>
    <property type="match status" value="1"/>
</dbReference>
<dbReference type="SUPFAM" id="SSF57716">
    <property type="entry name" value="Glucocorticoid receptor-like (DNA-binding domain)"/>
    <property type="match status" value="1"/>
</dbReference>
<accession>A4SI66</accession>
<sequence>MVTKVKCPTCKTELEWGPQSPFRPFCSKRCQLIDLGEWADEEKRIPGPINPDLLPYPDEGEQWQ</sequence>
<name>YACG_AERS4</name>
<protein>
    <recommendedName>
        <fullName evidence="1">DNA gyrase inhibitor YacG</fullName>
    </recommendedName>
</protein>
<comment type="function">
    <text evidence="1">Inhibits all the catalytic activities of DNA gyrase by preventing its interaction with DNA. Acts by binding directly to the C-terminal domain of GyrB, which probably disrupts DNA binding by the gyrase.</text>
</comment>
<comment type="cofactor">
    <cofactor evidence="1">
        <name>Zn(2+)</name>
        <dbReference type="ChEBI" id="CHEBI:29105"/>
    </cofactor>
    <text evidence="1">Binds 1 zinc ion.</text>
</comment>
<comment type="subunit">
    <text evidence="1">Interacts with GyrB.</text>
</comment>
<comment type="similarity">
    <text evidence="1">Belongs to the DNA gyrase inhibitor YacG family.</text>
</comment>
<proteinExistence type="inferred from homology"/>
<feature type="chain" id="PRO_1000056967" description="DNA gyrase inhibitor YacG">
    <location>
        <begin position="1"/>
        <end position="64"/>
    </location>
</feature>
<feature type="region of interest" description="Disordered" evidence="2">
    <location>
        <begin position="43"/>
        <end position="64"/>
    </location>
</feature>
<feature type="binding site" evidence="1">
    <location>
        <position position="7"/>
    </location>
    <ligand>
        <name>Zn(2+)</name>
        <dbReference type="ChEBI" id="CHEBI:29105"/>
    </ligand>
</feature>
<feature type="binding site" evidence="1">
    <location>
        <position position="10"/>
    </location>
    <ligand>
        <name>Zn(2+)</name>
        <dbReference type="ChEBI" id="CHEBI:29105"/>
    </ligand>
</feature>
<feature type="binding site" evidence="1">
    <location>
        <position position="26"/>
    </location>
    <ligand>
        <name>Zn(2+)</name>
        <dbReference type="ChEBI" id="CHEBI:29105"/>
    </ligand>
</feature>
<feature type="binding site" evidence="1">
    <location>
        <position position="30"/>
    </location>
    <ligand>
        <name>Zn(2+)</name>
        <dbReference type="ChEBI" id="CHEBI:29105"/>
    </ligand>
</feature>
<keyword id="KW-0479">Metal-binding</keyword>
<keyword id="KW-0862">Zinc</keyword>
<reference key="1">
    <citation type="journal article" date="2008" name="BMC Genomics">
        <title>The genome of Aeromonas salmonicida subsp. salmonicida A449: insights into the evolution of a fish pathogen.</title>
        <authorList>
            <person name="Reith M.E."/>
            <person name="Singh R.K."/>
            <person name="Curtis B."/>
            <person name="Boyd J.M."/>
            <person name="Bouevitch A."/>
            <person name="Kimball J."/>
            <person name="Munholland J."/>
            <person name="Murphy C."/>
            <person name="Sarty D."/>
            <person name="Williams J."/>
            <person name="Nash J.H."/>
            <person name="Johnson S.C."/>
            <person name="Brown L.L."/>
        </authorList>
    </citation>
    <scope>NUCLEOTIDE SEQUENCE [LARGE SCALE GENOMIC DNA]</scope>
    <source>
        <strain>A449</strain>
    </source>
</reference>